<proteinExistence type="inferred from homology"/>
<name>MNHG1_STAEQ</name>
<gene>
    <name type="primary">mnhG1</name>
    <name type="ordered locus">SERP0532</name>
</gene>
<comment type="function">
    <text evidence="1">Mnh complex is a Na(+)/H(+) antiporter involved in Na(+) excretion.</text>
</comment>
<comment type="subunit">
    <text evidence="1">May form a heterooligomeric complex that consists of seven subunits: mnhA1, mnhB1, mnhC1, mnhD1, mnhE1, mnhF1 and mnhG1.</text>
</comment>
<comment type="subcellular location">
    <subcellularLocation>
        <location evidence="3">Cell membrane</location>
        <topology evidence="3">Multi-pass membrane protein</topology>
    </subcellularLocation>
</comment>
<comment type="similarity">
    <text evidence="3">Belongs to the CPA3 antiporters (TC 2.A.63) subunit G family.</text>
</comment>
<organism>
    <name type="scientific">Staphylococcus epidermidis (strain ATCC 35984 / DSM 28319 / BCRC 17069 / CCUG 31568 / BM 3577 / RP62A)</name>
    <dbReference type="NCBI Taxonomy" id="176279"/>
    <lineage>
        <taxon>Bacteria</taxon>
        <taxon>Bacillati</taxon>
        <taxon>Bacillota</taxon>
        <taxon>Bacilli</taxon>
        <taxon>Bacillales</taxon>
        <taxon>Staphylococcaceae</taxon>
        <taxon>Staphylococcus</taxon>
    </lineage>
</organism>
<reference key="1">
    <citation type="journal article" date="2005" name="J. Bacteriol.">
        <title>Insights on evolution of virulence and resistance from the complete genome analysis of an early methicillin-resistant Staphylococcus aureus strain and a biofilm-producing methicillin-resistant Staphylococcus epidermidis strain.</title>
        <authorList>
            <person name="Gill S.R."/>
            <person name="Fouts D.E."/>
            <person name="Archer G.L."/>
            <person name="Mongodin E.F."/>
            <person name="DeBoy R.T."/>
            <person name="Ravel J."/>
            <person name="Paulsen I.T."/>
            <person name="Kolonay J.F."/>
            <person name="Brinkac L.M."/>
            <person name="Beanan M.J."/>
            <person name="Dodson R.J."/>
            <person name="Daugherty S.C."/>
            <person name="Madupu R."/>
            <person name="Angiuoli S.V."/>
            <person name="Durkin A.S."/>
            <person name="Haft D.H."/>
            <person name="Vamathevan J.J."/>
            <person name="Khouri H."/>
            <person name="Utterback T.R."/>
            <person name="Lee C."/>
            <person name="Dimitrov G."/>
            <person name="Jiang L."/>
            <person name="Qin H."/>
            <person name="Weidman J."/>
            <person name="Tran K."/>
            <person name="Kang K.H."/>
            <person name="Hance I.R."/>
            <person name="Nelson K.E."/>
            <person name="Fraser C.M."/>
        </authorList>
    </citation>
    <scope>NUCLEOTIDE SEQUENCE [LARGE SCALE GENOMIC DNA]</scope>
    <source>
        <strain>ATCC 35984 / DSM 28319 / BCRC 17069 / CCUG 31568 / BM 3577 / RP62A</strain>
    </source>
</reference>
<accession>Q5HQL6</accession>
<keyword id="KW-0050">Antiport</keyword>
<keyword id="KW-1003">Cell membrane</keyword>
<keyword id="KW-0375">Hydrogen ion transport</keyword>
<keyword id="KW-0406">Ion transport</keyword>
<keyword id="KW-0472">Membrane</keyword>
<keyword id="KW-1185">Reference proteome</keyword>
<keyword id="KW-0915">Sodium</keyword>
<keyword id="KW-0739">Sodium transport</keyword>
<keyword id="KW-0812">Transmembrane</keyword>
<keyword id="KW-1133">Transmembrane helix</keyword>
<keyword id="KW-0813">Transport</keyword>
<sequence>MIATIVTSVSIIFVVLGALISAFAATGLIRLRDVYSRAHAAGKAATLGAMFLLFGAFLYFIGTEGYVNMQLIIGIIFVFITGPLSSHLIMKAAYNIKTPYTKDTKIDEIKEDMKHTKL</sequence>
<dbReference type="EMBL" id="CP000029">
    <property type="protein sequence ID" value="AAW53928.1"/>
    <property type="molecule type" value="Genomic_DNA"/>
</dbReference>
<dbReference type="RefSeq" id="WP_001831900.1">
    <property type="nucleotide sequence ID" value="NC_002976.3"/>
</dbReference>
<dbReference type="SMR" id="Q5HQL6"/>
<dbReference type="STRING" id="176279.SERP0532"/>
<dbReference type="GeneID" id="50019213"/>
<dbReference type="KEGG" id="ser:SERP0532"/>
<dbReference type="eggNOG" id="COG1320">
    <property type="taxonomic scope" value="Bacteria"/>
</dbReference>
<dbReference type="HOGENOM" id="CLU_121334_0_3_9"/>
<dbReference type="Proteomes" id="UP000000531">
    <property type="component" value="Chromosome"/>
</dbReference>
<dbReference type="GO" id="GO:0005886">
    <property type="term" value="C:plasma membrane"/>
    <property type="evidence" value="ECO:0007669"/>
    <property type="project" value="UniProtKB-SubCell"/>
</dbReference>
<dbReference type="GO" id="GO:0015385">
    <property type="term" value="F:sodium:proton antiporter activity"/>
    <property type="evidence" value="ECO:0007669"/>
    <property type="project" value="TreeGrafter"/>
</dbReference>
<dbReference type="InterPro" id="IPR005133">
    <property type="entry name" value="PhaG_MnhG_YufB"/>
</dbReference>
<dbReference type="NCBIfam" id="TIGR01300">
    <property type="entry name" value="CPA3_mnhG_phaG"/>
    <property type="match status" value="1"/>
</dbReference>
<dbReference type="NCBIfam" id="NF009237">
    <property type="entry name" value="PRK12587.1"/>
    <property type="match status" value="1"/>
</dbReference>
<dbReference type="NCBIfam" id="NF009314">
    <property type="entry name" value="PRK12674.1-2"/>
    <property type="match status" value="1"/>
</dbReference>
<dbReference type="PANTHER" id="PTHR34703">
    <property type="entry name" value="ANTIPORTER SUBUNIT MNHG2-RELATED"/>
    <property type="match status" value="1"/>
</dbReference>
<dbReference type="PANTHER" id="PTHR34703:SF1">
    <property type="entry name" value="ANTIPORTER SUBUNIT MNHG2-RELATED"/>
    <property type="match status" value="1"/>
</dbReference>
<dbReference type="Pfam" id="PF03334">
    <property type="entry name" value="PhaG_MnhG_YufB"/>
    <property type="match status" value="1"/>
</dbReference>
<feature type="chain" id="PRO_0000372170" description="Na(+)/H(+) antiporter subunit G1">
    <location>
        <begin position="1"/>
        <end position="118"/>
    </location>
</feature>
<feature type="transmembrane region" description="Helical" evidence="2">
    <location>
        <begin position="9"/>
        <end position="29"/>
    </location>
</feature>
<feature type="transmembrane region" description="Helical" evidence="2">
    <location>
        <begin position="47"/>
        <end position="67"/>
    </location>
</feature>
<feature type="transmembrane region" description="Helical" evidence="2">
    <location>
        <begin position="69"/>
        <end position="89"/>
    </location>
</feature>
<evidence type="ECO:0000250" key="1"/>
<evidence type="ECO:0000255" key="2"/>
<evidence type="ECO:0000305" key="3"/>
<protein>
    <recommendedName>
        <fullName>Na(+)/H(+) antiporter subunit G1</fullName>
    </recommendedName>
    <alternativeName>
        <fullName>Mnh complex subunit G1</fullName>
    </alternativeName>
</protein>